<accession>Q13GD4</accession>
<name>SSUB3_PARXL</name>
<feature type="chain" id="PRO_0000279908" description="Aliphatic sulfonates import ATP-binding protein SsuB 3">
    <location>
        <begin position="1"/>
        <end position="247"/>
    </location>
</feature>
<feature type="domain" description="ABC transporter" evidence="1">
    <location>
        <begin position="28"/>
        <end position="242"/>
    </location>
</feature>
<feature type="binding site" evidence="1">
    <location>
        <begin position="60"/>
        <end position="67"/>
    </location>
    <ligand>
        <name>ATP</name>
        <dbReference type="ChEBI" id="CHEBI:30616"/>
    </ligand>
</feature>
<sequence>MTLDFALSQDAAVPAFTEEPVNPSPLAVSVRGLQRRYGARVVIDALDLDIREGEFVALLGESGCGKTTLLRALAGLDLPDAGQIRAPERPSVVFQEHRLLPWATLWENVALGHETTVGRAGAARALAEVGLSGREDDWPRNLSGGQAQRVALARGLARDPALLLLDEPFAALDALTRIKMHGLVKELVARHHPGVLLVTHDVDEALTLADRILVMRSGRIAASFQPETHTPQALRSILLEELGVQSL</sequence>
<gene>
    <name evidence="1" type="primary">ssuB3</name>
    <name type="ordered locus">Bxeno_C0927</name>
    <name type="ORF">Bxe_C0982</name>
</gene>
<evidence type="ECO:0000255" key="1">
    <source>
        <dbReference type="HAMAP-Rule" id="MF_01724"/>
    </source>
</evidence>
<reference key="1">
    <citation type="journal article" date="2006" name="Proc. Natl. Acad. Sci. U.S.A.">
        <title>Burkholderia xenovorans LB400 harbors a multi-replicon, 9.73-Mbp genome shaped for versatility.</title>
        <authorList>
            <person name="Chain P.S.G."/>
            <person name="Denef V.J."/>
            <person name="Konstantinidis K.T."/>
            <person name="Vergez L.M."/>
            <person name="Agullo L."/>
            <person name="Reyes V.L."/>
            <person name="Hauser L."/>
            <person name="Cordova M."/>
            <person name="Gomez L."/>
            <person name="Gonzalez M."/>
            <person name="Land M."/>
            <person name="Lao V."/>
            <person name="Larimer F."/>
            <person name="LiPuma J.J."/>
            <person name="Mahenthiralingam E."/>
            <person name="Malfatti S.A."/>
            <person name="Marx C.J."/>
            <person name="Parnell J.J."/>
            <person name="Ramette A."/>
            <person name="Richardson P."/>
            <person name="Seeger M."/>
            <person name="Smith D."/>
            <person name="Spilker T."/>
            <person name="Sul W.J."/>
            <person name="Tsoi T.V."/>
            <person name="Ulrich L.E."/>
            <person name="Zhulin I.B."/>
            <person name="Tiedje J.M."/>
        </authorList>
    </citation>
    <scope>NUCLEOTIDE SEQUENCE [LARGE SCALE GENOMIC DNA]</scope>
    <source>
        <strain>LB400</strain>
    </source>
</reference>
<dbReference type="EC" id="7.6.2.14" evidence="1"/>
<dbReference type="EMBL" id="CP000272">
    <property type="protein sequence ID" value="ABE36855.1"/>
    <property type="molecule type" value="Genomic_DNA"/>
</dbReference>
<dbReference type="RefSeq" id="WP_011494102.1">
    <property type="nucleotide sequence ID" value="NC_007953.1"/>
</dbReference>
<dbReference type="SMR" id="Q13GD4"/>
<dbReference type="STRING" id="266265.Bxe_C0982"/>
<dbReference type="KEGG" id="bxb:DR64_7469"/>
<dbReference type="KEGG" id="bxe:Bxe_C0982"/>
<dbReference type="PATRIC" id="fig|266265.5.peg.8744"/>
<dbReference type="eggNOG" id="COG1116">
    <property type="taxonomic scope" value="Bacteria"/>
</dbReference>
<dbReference type="OrthoDB" id="9783039at2"/>
<dbReference type="Proteomes" id="UP000001817">
    <property type="component" value="Chromosome 3"/>
</dbReference>
<dbReference type="GO" id="GO:0005886">
    <property type="term" value="C:plasma membrane"/>
    <property type="evidence" value="ECO:0007669"/>
    <property type="project" value="UniProtKB-SubCell"/>
</dbReference>
<dbReference type="GO" id="GO:0005524">
    <property type="term" value="F:ATP binding"/>
    <property type="evidence" value="ECO:0007669"/>
    <property type="project" value="UniProtKB-KW"/>
</dbReference>
<dbReference type="GO" id="GO:0016887">
    <property type="term" value="F:ATP hydrolysis activity"/>
    <property type="evidence" value="ECO:0007669"/>
    <property type="project" value="InterPro"/>
</dbReference>
<dbReference type="Gene3D" id="3.40.50.300">
    <property type="entry name" value="P-loop containing nucleotide triphosphate hydrolases"/>
    <property type="match status" value="1"/>
</dbReference>
<dbReference type="InterPro" id="IPR003593">
    <property type="entry name" value="AAA+_ATPase"/>
</dbReference>
<dbReference type="InterPro" id="IPR003439">
    <property type="entry name" value="ABC_transporter-like_ATP-bd"/>
</dbReference>
<dbReference type="InterPro" id="IPR017871">
    <property type="entry name" value="ABC_transporter-like_CS"/>
</dbReference>
<dbReference type="InterPro" id="IPR050166">
    <property type="entry name" value="ABC_transporter_ATP-bind"/>
</dbReference>
<dbReference type="InterPro" id="IPR027417">
    <property type="entry name" value="P-loop_NTPase"/>
</dbReference>
<dbReference type="PANTHER" id="PTHR42788:SF17">
    <property type="entry name" value="ALIPHATIC SULFONATES IMPORT ATP-BINDING PROTEIN SSUB"/>
    <property type="match status" value="1"/>
</dbReference>
<dbReference type="PANTHER" id="PTHR42788">
    <property type="entry name" value="TAURINE IMPORT ATP-BINDING PROTEIN-RELATED"/>
    <property type="match status" value="1"/>
</dbReference>
<dbReference type="Pfam" id="PF00005">
    <property type="entry name" value="ABC_tran"/>
    <property type="match status" value="1"/>
</dbReference>
<dbReference type="SMART" id="SM00382">
    <property type="entry name" value="AAA"/>
    <property type="match status" value="1"/>
</dbReference>
<dbReference type="SUPFAM" id="SSF52540">
    <property type="entry name" value="P-loop containing nucleoside triphosphate hydrolases"/>
    <property type="match status" value="1"/>
</dbReference>
<dbReference type="PROSITE" id="PS00211">
    <property type="entry name" value="ABC_TRANSPORTER_1"/>
    <property type="match status" value="1"/>
</dbReference>
<dbReference type="PROSITE" id="PS50893">
    <property type="entry name" value="ABC_TRANSPORTER_2"/>
    <property type="match status" value="1"/>
</dbReference>
<dbReference type="PROSITE" id="PS51291">
    <property type="entry name" value="SSUB"/>
    <property type="match status" value="1"/>
</dbReference>
<proteinExistence type="inferred from homology"/>
<protein>
    <recommendedName>
        <fullName evidence="1">Aliphatic sulfonates import ATP-binding protein SsuB 3</fullName>
        <ecNumber evidence="1">7.6.2.14</ecNumber>
    </recommendedName>
</protein>
<comment type="function">
    <text evidence="1">Part of the ABC transporter complex SsuABC involved in aliphatic sulfonates import. Responsible for energy coupling to the transport system.</text>
</comment>
<comment type="catalytic activity">
    <reaction evidence="1">
        <text>ATP + H2O + aliphatic sulfonate-[sulfonate-binding protein]Side 1 = ADP + phosphate + aliphatic sulfonateSide 2 + [sulfonate-binding protein]Side 1.</text>
        <dbReference type="EC" id="7.6.2.14"/>
    </reaction>
</comment>
<comment type="subunit">
    <text evidence="1">The complex is composed of two ATP-binding proteins (SsuB), two transmembrane proteins (SsuC) and a solute-binding protein (SsuA).</text>
</comment>
<comment type="subcellular location">
    <subcellularLocation>
        <location evidence="1">Cell inner membrane</location>
        <topology evidence="1">Peripheral membrane protein</topology>
    </subcellularLocation>
</comment>
<comment type="similarity">
    <text evidence="1">Belongs to the ABC transporter superfamily. Aliphatic sulfonates importer (TC 3.A.1.17.2) family.</text>
</comment>
<keyword id="KW-0067">ATP-binding</keyword>
<keyword id="KW-0997">Cell inner membrane</keyword>
<keyword id="KW-1003">Cell membrane</keyword>
<keyword id="KW-0472">Membrane</keyword>
<keyword id="KW-0547">Nucleotide-binding</keyword>
<keyword id="KW-1185">Reference proteome</keyword>
<keyword id="KW-1278">Translocase</keyword>
<keyword id="KW-0813">Transport</keyword>
<organism>
    <name type="scientific">Paraburkholderia xenovorans (strain LB400)</name>
    <dbReference type="NCBI Taxonomy" id="266265"/>
    <lineage>
        <taxon>Bacteria</taxon>
        <taxon>Pseudomonadati</taxon>
        <taxon>Pseudomonadota</taxon>
        <taxon>Betaproteobacteria</taxon>
        <taxon>Burkholderiales</taxon>
        <taxon>Burkholderiaceae</taxon>
        <taxon>Paraburkholderia</taxon>
    </lineage>
</organism>